<keyword id="KW-0963">Cytoplasm</keyword>
<keyword id="KW-0391">Immunity</keyword>
<keyword id="KW-0395">Inflammatory response</keyword>
<keyword id="KW-0399">Innate immunity</keyword>
<keyword id="KW-1185">Reference proteome</keyword>
<accession>A8QMS7</accession>
<evidence type="ECO:0000250" key="1"/>
<evidence type="ECO:0000255" key="2">
    <source>
        <dbReference type="PROSITE-ProRule" id="PRU00064"/>
    </source>
</evidence>
<evidence type="ECO:0000255" key="3">
    <source>
        <dbReference type="PROSITE-ProRule" id="PRU00204"/>
    </source>
</evidence>
<organism>
    <name type="scientific">Takifugu rubripes</name>
    <name type="common">Japanese pufferfish</name>
    <name type="synonym">Fugu rubripes</name>
    <dbReference type="NCBI Taxonomy" id="31033"/>
    <lineage>
        <taxon>Eukaryota</taxon>
        <taxon>Metazoa</taxon>
        <taxon>Chordata</taxon>
        <taxon>Craniata</taxon>
        <taxon>Vertebrata</taxon>
        <taxon>Euteleostomi</taxon>
        <taxon>Actinopterygii</taxon>
        <taxon>Neopterygii</taxon>
        <taxon>Teleostei</taxon>
        <taxon>Neoteleostei</taxon>
        <taxon>Acanthomorphata</taxon>
        <taxon>Eupercaria</taxon>
        <taxon>Tetraodontiformes</taxon>
        <taxon>Tetradontoidea</taxon>
        <taxon>Tetraodontidae</taxon>
        <taxon>Takifugu</taxon>
    </lineage>
</organism>
<protein>
    <recommendedName>
        <fullName>Myeloid differentiation primary response protein MyD88</fullName>
    </recommendedName>
</protein>
<name>MYD88_TAKRU</name>
<sequence>MAYCNSKTDLSRVPLLALNMGFRKKVGLYLNPRNAVAADWMALAEALGFTFLEIKNYESAINPTVKVLEDWQARSTDATVGKLLSILSEVERNDVLEDLQPMIDEDVRRYCERLNRDPEPPVQVNQVDSCFHRTLERVGLTLHDDPEGTPELFDAFICYCQRDFEFVQEMIRQLEETDFKLKLCVFDRDVLPGSCVWTITSELIEKRCKRMVVVISDEYLDSEACDFQTKFALSLSPGARNKRLIPVKYKSMSKPFPSILRFLTLCDYTRPCTQAWFWKRLAKALSLP</sequence>
<dbReference type="EMBL" id="AB197918">
    <property type="protein sequence ID" value="BAF91189.1"/>
    <property type="molecule type" value="mRNA"/>
</dbReference>
<dbReference type="RefSeq" id="NP_001106666.1">
    <property type="nucleotide sequence ID" value="NM_001113195.1"/>
</dbReference>
<dbReference type="SMR" id="A8QMS7"/>
<dbReference type="FunCoup" id="A8QMS7">
    <property type="interactions" value="1494"/>
</dbReference>
<dbReference type="STRING" id="31033.ENSTRUP00000050655"/>
<dbReference type="GeneID" id="100134853"/>
<dbReference type="KEGG" id="tru:100134853"/>
<dbReference type="CTD" id="4615"/>
<dbReference type="eggNOG" id="ENOG502QWKI">
    <property type="taxonomic scope" value="Eukaryota"/>
</dbReference>
<dbReference type="InParanoid" id="A8QMS7"/>
<dbReference type="OrthoDB" id="10037120at2759"/>
<dbReference type="Proteomes" id="UP000005226">
    <property type="component" value="Unplaced"/>
</dbReference>
<dbReference type="GO" id="GO:0005737">
    <property type="term" value="C:cytoplasm"/>
    <property type="evidence" value="ECO:0007669"/>
    <property type="project" value="UniProtKB-SubCell"/>
</dbReference>
<dbReference type="GO" id="GO:0005886">
    <property type="term" value="C:plasma membrane"/>
    <property type="evidence" value="ECO:0007669"/>
    <property type="project" value="TreeGrafter"/>
</dbReference>
<dbReference type="GO" id="GO:0070976">
    <property type="term" value="F:TIR domain binding"/>
    <property type="evidence" value="ECO:0007669"/>
    <property type="project" value="InterPro"/>
</dbReference>
<dbReference type="GO" id="GO:0035325">
    <property type="term" value="F:Toll-like receptor binding"/>
    <property type="evidence" value="ECO:0007669"/>
    <property type="project" value="TreeGrafter"/>
</dbReference>
<dbReference type="GO" id="GO:0050830">
    <property type="term" value="P:defense response to Gram-positive bacterium"/>
    <property type="evidence" value="ECO:0007669"/>
    <property type="project" value="TreeGrafter"/>
</dbReference>
<dbReference type="GO" id="GO:0006954">
    <property type="term" value="P:inflammatory response"/>
    <property type="evidence" value="ECO:0007669"/>
    <property type="project" value="UniProtKB-KW"/>
</dbReference>
<dbReference type="GO" id="GO:0045087">
    <property type="term" value="P:innate immune response"/>
    <property type="evidence" value="ECO:0007669"/>
    <property type="project" value="UniProtKB-KW"/>
</dbReference>
<dbReference type="GO" id="GO:0002755">
    <property type="term" value="P:MyD88-dependent toll-like receptor signaling pathway"/>
    <property type="evidence" value="ECO:0007669"/>
    <property type="project" value="InterPro"/>
</dbReference>
<dbReference type="GO" id="GO:0043123">
    <property type="term" value="P:positive regulation of canonical NF-kappaB signal transduction"/>
    <property type="evidence" value="ECO:0007669"/>
    <property type="project" value="InterPro"/>
</dbReference>
<dbReference type="GO" id="GO:0008063">
    <property type="term" value="P:Toll signaling pathway"/>
    <property type="evidence" value="ECO:0007669"/>
    <property type="project" value="TreeGrafter"/>
</dbReference>
<dbReference type="GO" id="GO:0034142">
    <property type="term" value="P:toll-like receptor 4 signaling pathway"/>
    <property type="evidence" value="ECO:0007669"/>
    <property type="project" value="TreeGrafter"/>
</dbReference>
<dbReference type="CDD" id="cd08312">
    <property type="entry name" value="Death_MyD88"/>
    <property type="match status" value="1"/>
</dbReference>
<dbReference type="FunFam" id="1.10.533.10:FF:000029">
    <property type="entry name" value="Myeloid differentiation primary response protein MyD88"/>
    <property type="match status" value="1"/>
</dbReference>
<dbReference type="FunFam" id="3.40.50.10140:FF:000005">
    <property type="entry name" value="Myeloid differentiation primary response protein MyD88"/>
    <property type="match status" value="1"/>
</dbReference>
<dbReference type="Gene3D" id="1.10.533.10">
    <property type="entry name" value="Death Domain, Fas"/>
    <property type="match status" value="1"/>
</dbReference>
<dbReference type="Gene3D" id="3.40.50.10140">
    <property type="entry name" value="Toll/interleukin-1 receptor homology (TIR) domain"/>
    <property type="match status" value="1"/>
</dbReference>
<dbReference type="InterPro" id="IPR011029">
    <property type="entry name" value="DEATH-like_dom_sf"/>
</dbReference>
<dbReference type="InterPro" id="IPR000488">
    <property type="entry name" value="Death_dom"/>
</dbReference>
<dbReference type="InterPro" id="IPR034249">
    <property type="entry name" value="MyD88_Death"/>
</dbReference>
<dbReference type="InterPro" id="IPR017281">
    <property type="entry name" value="Myelin_different_resp_MyD88"/>
</dbReference>
<dbReference type="InterPro" id="IPR000157">
    <property type="entry name" value="TIR_dom"/>
</dbReference>
<dbReference type="InterPro" id="IPR035897">
    <property type="entry name" value="Toll_tir_struct_dom_sf"/>
</dbReference>
<dbReference type="PANTHER" id="PTHR15079">
    <property type="entry name" value="MYD88"/>
    <property type="match status" value="1"/>
</dbReference>
<dbReference type="PANTHER" id="PTHR15079:SF3">
    <property type="entry name" value="MYELOID DIFFERENTIATION PRIMARY RESPONSE PROTEIN MYD88"/>
    <property type="match status" value="1"/>
</dbReference>
<dbReference type="Pfam" id="PF00531">
    <property type="entry name" value="Death"/>
    <property type="match status" value="1"/>
</dbReference>
<dbReference type="Pfam" id="PF13676">
    <property type="entry name" value="TIR_2"/>
    <property type="match status" value="1"/>
</dbReference>
<dbReference type="PIRSF" id="PIRSF037756">
    <property type="entry name" value="MyD88"/>
    <property type="match status" value="1"/>
</dbReference>
<dbReference type="SMART" id="SM00005">
    <property type="entry name" value="DEATH"/>
    <property type="match status" value="1"/>
</dbReference>
<dbReference type="SMART" id="SM00255">
    <property type="entry name" value="TIR"/>
    <property type="match status" value="1"/>
</dbReference>
<dbReference type="SUPFAM" id="SSF47986">
    <property type="entry name" value="DEATH domain"/>
    <property type="match status" value="1"/>
</dbReference>
<dbReference type="SUPFAM" id="SSF52200">
    <property type="entry name" value="Toll/Interleukin receptor TIR domain"/>
    <property type="match status" value="1"/>
</dbReference>
<dbReference type="PROSITE" id="PS50017">
    <property type="entry name" value="DEATH_DOMAIN"/>
    <property type="match status" value="1"/>
</dbReference>
<dbReference type="PROSITE" id="PS50104">
    <property type="entry name" value="TIR"/>
    <property type="match status" value="1"/>
</dbReference>
<reference key="1">
    <citation type="submission" date="2005-01" db="EMBL/GenBank/DDBJ databases">
        <title>Function analysis of Fugu rubripes Toll-like receptor21,22.</title>
        <authorList>
            <person name="Matsuo A."/>
            <person name="Seya T."/>
        </authorList>
    </citation>
    <scope>NUCLEOTIDE SEQUENCE [MRNA]</scope>
    <source>
        <tissue>Kidney</tissue>
    </source>
</reference>
<proteinExistence type="evidence at transcript level"/>
<comment type="function">
    <text evidence="1">Adapter protein involved in the Toll-like receptor and IL-1 receptor signaling pathway in the innate immune response.</text>
</comment>
<comment type="subcellular location">
    <subcellularLocation>
        <location evidence="1">Cytoplasm</location>
    </subcellularLocation>
</comment>
<comment type="domain">
    <text evidence="1">The intermediate domain (ID) is required for the phosphorylation and activation of IRAK.</text>
</comment>
<feature type="chain" id="PRO_0000393144" description="Myeloid differentiation primary response protein MyD88">
    <location>
        <begin position="1"/>
        <end position="288"/>
    </location>
</feature>
<feature type="domain" description="Death" evidence="2">
    <location>
        <begin position="25"/>
        <end position="103"/>
    </location>
</feature>
<feature type="domain" description="TIR" evidence="3">
    <location>
        <begin position="151"/>
        <end position="285"/>
    </location>
</feature>
<feature type="region of interest" description="Intermediate domain" evidence="1">
    <location>
        <begin position="104"/>
        <end position="148"/>
    </location>
</feature>
<gene>
    <name type="primary">myd88</name>
</gene>